<gene>
    <name evidence="1" type="primary">tyrS</name>
    <name type="ordered locus">Dde_0228</name>
</gene>
<accession>Q316W7</accession>
<evidence type="ECO:0000255" key="1">
    <source>
        <dbReference type="HAMAP-Rule" id="MF_02007"/>
    </source>
</evidence>
<comment type="function">
    <text evidence="1">Catalyzes the attachment of tyrosine to tRNA(Tyr) in a two-step reaction: tyrosine is first activated by ATP to form Tyr-AMP and then transferred to the acceptor end of tRNA(Tyr).</text>
</comment>
<comment type="catalytic activity">
    <reaction evidence="1">
        <text>tRNA(Tyr) + L-tyrosine + ATP = L-tyrosyl-tRNA(Tyr) + AMP + diphosphate + H(+)</text>
        <dbReference type="Rhea" id="RHEA:10220"/>
        <dbReference type="Rhea" id="RHEA-COMP:9706"/>
        <dbReference type="Rhea" id="RHEA-COMP:9707"/>
        <dbReference type="ChEBI" id="CHEBI:15378"/>
        <dbReference type="ChEBI" id="CHEBI:30616"/>
        <dbReference type="ChEBI" id="CHEBI:33019"/>
        <dbReference type="ChEBI" id="CHEBI:58315"/>
        <dbReference type="ChEBI" id="CHEBI:78442"/>
        <dbReference type="ChEBI" id="CHEBI:78536"/>
        <dbReference type="ChEBI" id="CHEBI:456215"/>
        <dbReference type="EC" id="6.1.1.1"/>
    </reaction>
</comment>
<comment type="subunit">
    <text evidence="1">Homodimer.</text>
</comment>
<comment type="subcellular location">
    <subcellularLocation>
        <location evidence="1">Cytoplasm</location>
    </subcellularLocation>
</comment>
<comment type="similarity">
    <text evidence="1">Belongs to the class-I aminoacyl-tRNA synthetase family. TyrS type 2 subfamily.</text>
</comment>
<dbReference type="EC" id="6.1.1.1" evidence="1"/>
<dbReference type="EMBL" id="CP000112">
    <property type="protein sequence ID" value="ABB37029.2"/>
    <property type="molecule type" value="Genomic_DNA"/>
</dbReference>
<dbReference type="RefSeq" id="WP_011366381.1">
    <property type="nucleotide sequence ID" value="NC_007519.1"/>
</dbReference>
<dbReference type="SMR" id="Q316W7"/>
<dbReference type="STRING" id="207559.Dde_0228"/>
<dbReference type="KEGG" id="dde:Dde_0228"/>
<dbReference type="eggNOG" id="COG0162">
    <property type="taxonomic scope" value="Bacteria"/>
</dbReference>
<dbReference type="HOGENOM" id="CLU_024003_5_0_7"/>
<dbReference type="Proteomes" id="UP000002710">
    <property type="component" value="Chromosome"/>
</dbReference>
<dbReference type="GO" id="GO:0005829">
    <property type="term" value="C:cytosol"/>
    <property type="evidence" value="ECO:0007669"/>
    <property type="project" value="TreeGrafter"/>
</dbReference>
<dbReference type="GO" id="GO:0005524">
    <property type="term" value="F:ATP binding"/>
    <property type="evidence" value="ECO:0007669"/>
    <property type="project" value="UniProtKB-UniRule"/>
</dbReference>
<dbReference type="GO" id="GO:0003723">
    <property type="term" value="F:RNA binding"/>
    <property type="evidence" value="ECO:0007669"/>
    <property type="project" value="UniProtKB-KW"/>
</dbReference>
<dbReference type="GO" id="GO:0004831">
    <property type="term" value="F:tyrosine-tRNA ligase activity"/>
    <property type="evidence" value="ECO:0007669"/>
    <property type="project" value="UniProtKB-UniRule"/>
</dbReference>
<dbReference type="GO" id="GO:0006437">
    <property type="term" value="P:tyrosyl-tRNA aminoacylation"/>
    <property type="evidence" value="ECO:0007669"/>
    <property type="project" value="UniProtKB-UniRule"/>
</dbReference>
<dbReference type="CDD" id="cd00165">
    <property type="entry name" value="S4"/>
    <property type="match status" value="1"/>
</dbReference>
<dbReference type="CDD" id="cd00805">
    <property type="entry name" value="TyrRS_core"/>
    <property type="match status" value="1"/>
</dbReference>
<dbReference type="FunFam" id="1.10.240.10:FF:000006">
    <property type="entry name" value="Tyrosine--tRNA ligase"/>
    <property type="match status" value="1"/>
</dbReference>
<dbReference type="FunFam" id="3.40.50.620:FF:000061">
    <property type="entry name" value="Tyrosine--tRNA ligase"/>
    <property type="match status" value="1"/>
</dbReference>
<dbReference type="Gene3D" id="3.40.50.620">
    <property type="entry name" value="HUPs"/>
    <property type="match status" value="1"/>
</dbReference>
<dbReference type="Gene3D" id="3.10.290.10">
    <property type="entry name" value="RNA-binding S4 domain"/>
    <property type="match status" value="1"/>
</dbReference>
<dbReference type="Gene3D" id="1.10.240.10">
    <property type="entry name" value="Tyrosyl-Transfer RNA Synthetase"/>
    <property type="match status" value="1"/>
</dbReference>
<dbReference type="HAMAP" id="MF_02007">
    <property type="entry name" value="Tyr_tRNA_synth_type2"/>
    <property type="match status" value="1"/>
</dbReference>
<dbReference type="InterPro" id="IPR001412">
    <property type="entry name" value="aa-tRNA-synth_I_CS"/>
</dbReference>
<dbReference type="InterPro" id="IPR002305">
    <property type="entry name" value="aa-tRNA-synth_Ic"/>
</dbReference>
<dbReference type="InterPro" id="IPR014729">
    <property type="entry name" value="Rossmann-like_a/b/a_fold"/>
</dbReference>
<dbReference type="InterPro" id="IPR002942">
    <property type="entry name" value="S4_RNA-bd"/>
</dbReference>
<dbReference type="InterPro" id="IPR036986">
    <property type="entry name" value="S4_RNA-bd_sf"/>
</dbReference>
<dbReference type="InterPro" id="IPR002307">
    <property type="entry name" value="Tyr-tRNA-ligase"/>
</dbReference>
<dbReference type="InterPro" id="IPR024088">
    <property type="entry name" value="Tyr-tRNA-ligase_bac-type"/>
</dbReference>
<dbReference type="InterPro" id="IPR024108">
    <property type="entry name" value="Tyr-tRNA-ligase_bac_2"/>
</dbReference>
<dbReference type="NCBIfam" id="TIGR00234">
    <property type="entry name" value="tyrS"/>
    <property type="match status" value="1"/>
</dbReference>
<dbReference type="PANTHER" id="PTHR11766:SF1">
    <property type="entry name" value="TYROSINE--TRNA LIGASE"/>
    <property type="match status" value="1"/>
</dbReference>
<dbReference type="PANTHER" id="PTHR11766">
    <property type="entry name" value="TYROSYL-TRNA SYNTHETASE"/>
    <property type="match status" value="1"/>
</dbReference>
<dbReference type="Pfam" id="PF01479">
    <property type="entry name" value="S4"/>
    <property type="match status" value="1"/>
</dbReference>
<dbReference type="Pfam" id="PF00579">
    <property type="entry name" value="tRNA-synt_1b"/>
    <property type="match status" value="1"/>
</dbReference>
<dbReference type="PRINTS" id="PR01040">
    <property type="entry name" value="TRNASYNTHTYR"/>
</dbReference>
<dbReference type="SMART" id="SM00363">
    <property type="entry name" value="S4"/>
    <property type="match status" value="1"/>
</dbReference>
<dbReference type="SUPFAM" id="SSF55174">
    <property type="entry name" value="Alpha-L RNA-binding motif"/>
    <property type="match status" value="1"/>
</dbReference>
<dbReference type="SUPFAM" id="SSF52374">
    <property type="entry name" value="Nucleotidylyl transferase"/>
    <property type="match status" value="1"/>
</dbReference>
<dbReference type="PROSITE" id="PS00178">
    <property type="entry name" value="AA_TRNA_LIGASE_I"/>
    <property type="match status" value="1"/>
</dbReference>
<dbReference type="PROSITE" id="PS50889">
    <property type="entry name" value="S4"/>
    <property type="match status" value="1"/>
</dbReference>
<organism>
    <name type="scientific">Oleidesulfovibrio alaskensis (strain ATCC BAA-1058 / DSM 17464 / G20)</name>
    <name type="common">Desulfovibrio alaskensis</name>
    <dbReference type="NCBI Taxonomy" id="207559"/>
    <lineage>
        <taxon>Bacteria</taxon>
        <taxon>Pseudomonadati</taxon>
        <taxon>Thermodesulfobacteriota</taxon>
        <taxon>Desulfovibrionia</taxon>
        <taxon>Desulfovibrionales</taxon>
        <taxon>Desulfovibrionaceae</taxon>
        <taxon>Oleidesulfovibrio</taxon>
    </lineage>
</organism>
<reference key="1">
    <citation type="journal article" date="2011" name="J. Bacteriol.">
        <title>Complete genome sequence and updated annotation of Desulfovibrio alaskensis G20.</title>
        <authorList>
            <person name="Hauser L.J."/>
            <person name="Land M.L."/>
            <person name="Brown S.D."/>
            <person name="Larimer F."/>
            <person name="Keller K.L."/>
            <person name="Rapp-Giles B.J."/>
            <person name="Price M.N."/>
            <person name="Lin M."/>
            <person name="Bruce D.C."/>
            <person name="Detter J.C."/>
            <person name="Tapia R."/>
            <person name="Han C.S."/>
            <person name="Goodwin L.A."/>
            <person name="Cheng J.F."/>
            <person name="Pitluck S."/>
            <person name="Copeland A."/>
            <person name="Lucas S."/>
            <person name="Nolan M."/>
            <person name="Lapidus A.L."/>
            <person name="Palumbo A.V."/>
            <person name="Wall J.D."/>
        </authorList>
    </citation>
    <scope>NUCLEOTIDE SEQUENCE [LARGE SCALE GENOMIC DNA]</scope>
    <source>
        <strain>ATCC BAA-1058 / DSM 17464 / G20</strain>
    </source>
</reference>
<keyword id="KW-0030">Aminoacyl-tRNA synthetase</keyword>
<keyword id="KW-0067">ATP-binding</keyword>
<keyword id="KW-0963">Cytoplasm</keyword>
<keyword id="KW-0436">Ligase</keyword>
<keyword id="KW-0547">Nucleotide-binding</keyword>
<keyword id="KW-0648">Protein biosynthesis</keyword>
<keyword id="KW-1185">Reference proteome</keyword>
<keyword id="KW-0694">RNA-binding</keyword>
<name>SYY_OLEA2</name>
<protein>
    <recommendedName>
        <fullName evidence="1">Tyrosine--tRNA ligase</fullName>
        <ecNumber evidence="1">6.1.1.1</ecNumber>
    </recommendedName>
    <alternativeName>
        <fullName evidence="1">Tyrosyl-tRNA synthetase</fullName>
        <shortName evidence="1">TyrRS</shortName>
    </alternativeName>
</protein>
<proteinExistence type="inferred from homology"/>
<sequence length="397" mass="44550">MDMDQQLKTILRGSAEFIDEEELKKKLAKGRPLRVKAGFDPTAPDLHLGHTVLIHKLRHFQELGHTVIFLIGDFTGMIGDPSGRSETRPPLTREQVLQNAETYKKQVFKILDPEKTEVRFNSEWMDKFGAADFIRLASRYTVARMLERDDFEKRYRSNMTISIHEFLYPLVQGYDSVALEADVELGGTDQKFNLLVGRHLQSQEGQEPQCVLTVPILEGLDGVKKMSKSLGNYVGIDEPPADMFGKLMSVSDELMWRYYELITTKTLDEIAELQRRVASGELHPKTAKEELAEHITAQYHGSDKAAEARQGFNAVFAQGCVPDDMPEFSCSCGEDSTPPAFLADSGLAGSRGEAKRLIKQGALSLDGEKLDDPNTPLTAGEYVVRLGKKRFLRLIVR</sequence>
<feature type="chain" id="PRO_0000236717" description="Tyrosine--tRNA ligase">
    <location>
        <begin position="1"/>
        <end position="397"/>
    </location>
</feature>
<feature type="domain" description="S4 RNA-binding" evidence="1">
    <location>
        <begin position="340"/>
        <end position="396"/>
    </location>
</feature>
<feature type="short sequence motif" description="'HIGH' region">
    <location>
        <begin position="41"/>
        <end position="50"/>
    </location>
</feature>
<feature type="short sequence motif" description="'KMSKS' region">
    <location>
        <begin position="225"/>
        <end position="229"/>
    </location>
</feature>
<feature type="binding site" evidence="1">
    <location>
        <position position="228"/>
    </location>
    <ligand>
        <name>ATP</name>
        <dbReference type="ChEBI" id="CHEBI:30616"/>
    </ligand>
</feature>